<proteinExistence type="inferred from homology"/>
<reference key="1">
    <citation type="journal article" date="2009" name="PLoS Genet.">
        <title>Organised genome dynamics in the Escherichia coli species results in highly diverse adaptive paths.</title>
        <authorList>
            <person name="Touchon M."/>
            <person name="Hoede C."/>
            <person name="Tenaillon O."/>
            <person name="Barbe V."/>
            <person name="Baeriswyl S."/>
            <person name="Bidet P."/>
            <person name="Bingen E."/>
            <person name="Bonacorsi S."/>
            <person name="Bouchier C."/>
            <person name="Bouvet O."/>
            <person name="Calteau A."/>
            <person name="Chiapello H."/>
            <person name="Clermont O."/>
            <person name="Cruveiller S."/>
            <person name="Danchin A."/>
            <person name="Diard M."/>
            <person name="Dossat C."/>
            <person name="Karoui M.E."/>
            <person name="Frapy E."/>
            <person name="Garry L."/>
            <person name="Ghigo J.M."/>
            <person name="Gilles A.M."/>
            <person name="Johnson J."/>
            <person name="Le Bouguenec C."/>
            <person name="Lescat M."/>
            <person name="Mangenot S."/>
            <person name="Martinez-Jehanne V."/>
            <person name="Matic I."/>
            <person name="Nassif X."/>
            <person name="Oztas S."/>
            <person name="Petit M.A."/>
            <person name="Pichon C."/>
            <person name="Rouy Z."/>
            <person name="Ruf C.S."/>
            <person name="Schneider D."/>
            <person name="Tourret J."/>
            <person name="Vacherie B."/>
            <person name="Vallenet D."/>
            <person name="Medigue C."/>
            <person name="Rocha E.P.C."/>
            <person name="Denamur E."/>
        </authorList>
    </citation>
    <scope>NUCLEOTIDE SEQUENCE [LARGE SCALE GENOMIC DNA]</scope>
    <source>
        <strain>IAI39 / ExPEC</strain>
    </source>
</reference>
<keyword id="KW-0007">Acetylation</keyword>
<keyword id="KW-0963">Cytoplasm</keyword>
<keyword id="KW-0342">GTP-binding</keyword>
<keyword id="KW-0396">Initiation factor</keyword>
<keyword id="KW-0547">Nucleotide-binding</keyword>
<keyword id="KW-0648">Protein biosynthesis</keyword>
<gene>
    <name evidence="2" type="primary">infB</name>
    <name type="ordered locus">ECIAI39_3665</name>
</gene>
<feature type="chain" id="PRO_1000117329" description="Translation initiation factor IF-2">
    <location>
        <begin position="1"/>
        <end position="890"/>
    </location>
</feature>
<feature type="domain" description="tr-type G">
    <location>
        <begin position="389"/>
        <end position="558"/>
    </location>
</feature>
<feature type="region of interest" description="Disordered" evidence="3">
    <location>
        <begin position="45"/>
        <end position="304"/>
    </location>
</feature>
<feature type="region of interest" description="G1" evidence="1">
    <location>
        <begin position="398"/>
        <end position="405"/>
    </location>
</feature>
<feature type="region of interest" description="G2" evidence="1">
    <location>
        <begin position="423"/>
        <end position="427"/>
    </location>
</feature>
<feature type="region of interest" description="G3" evidence="1">
    <location>
        <begin position="444"/>
        <end position="447"/>
    </location>
</feature>
<feature type="region of interest" description="G4" evidence="1">
    <location>
        <begin position="498"/>
        <end position="501"/>
    </location>
</feature>
<feature type="region of interest" description="G5" evidence="1">
    <location>
        <begin position="534"/>
        <end position="536"/>
    </location>
</feature>
<feature type="compositionally biased region" description="Polar residues" evidence="3">
    <location>
        <begin position="67"/>
        <end position="81"/>
    </location>
</feature>
<feature type="compositionally biased region" description="Basic and acidic residues" evidence="3">
    <location>
        <begin position="92"/>
        <end position="217"/>
    </location>
</feature>
<feature type="compositionally biased region" description="Basic residues" evidence="3">
    <location>
        <begin position="252"/>
        <end position="266"/>
    </location>
</feature>
<feature type="compositionally biased region" description="Basic and acidic residues" evidence="3">
    <location>
        <begin position="267"/>
        <end position="280"/>
    </location>
</feature>
<feature type="binding site" evidence="2">
    <location>
        <begin position="398"/>
        <end position="405"/>
    </location>
    <ligand>
        <name>GTP</name>
        <dbReference type="ChEBI" id="CHEBI:37565"/>
    </ligand>
</feature>
<feature type="binding site" evidence="2">
    <location>
        <begin position="444"/>
        <end position="448"/>
    </location>
    <ligand>
        <name>GTP</name>
        <dbReference type="ChEBI" id="CHEBI:37565"/>
    </ligand>
</feature>
<feature type="binding site" evidence="2">
    <location>
        <begin position="498"/>
        <end position="501"/>
    </location>
    <ligand>
        <name>GTP</name>
        <dbReference type="ChEBI" id="CHEBI:37565"/>
    </ligand>
</feature>
<feature type="modified residue" description="N6-acetyllysine" evidence="1">
    <location>
        <position position="808"/>
    </location>
</feature>
<accession>B7NKN7</accession>
<dbReference type="EMBL" id="CU928164">
    <property type="protein sequence ID" value="CAR19781.1"/>
    <property type="molecule type" value="Genomic_DNA"/>
</dbReference>
<dbReference type="RefSeq" id="WP_000133044.1">
    <property type="nucleotide sequence ID" value="NC_011750.1"/>
</dbReference>
<dbReference type="RefSeq" id="YP_002409568.1">
    <property type="nucleotide sequence ID" value="NC_011750.1"/>
</dbReference>
<dbReference type="SMR" id="B7NKN7"/>
<dbReference type="STRING" id="585057.ECIAI39_3665"/>
<dbReference type="GeneID" id="75206024"/>
<dbReference type="KEGG" id="ect:ECIAI39_3665"/>
<dbReference type="PATRIC" id="fig|585057.6.peg.3798"/>
<dbReference type="HOGENOM" id="CLU_006301_6_3_6"/>
<dbReference type="Proteomes" id="UP000000749">
    <property type="component" value="Chromosome"/>
</dbReference>
<dbReference type="GO" id="GO:0005829">
    <property type="term" value="C:cytosol"/>
    <property type="evidence" value="ECO:0007669"/>
    <property type="project" value="TreeGrafter"/>
</dbReference>
<dbReference type="GO" id="GO:0005525">
    <property type="term" value="F:GTP binding"/>
    <property type="evidence" value="ECO:0007669"/>
    <property type="project" value="UniProtKB-KW"/>
</dbReference>
<dbReference type="GO" id="GO:0003924">
    <property type="term" value="F:GTPase activity"/>
    <property type="evidence" value="ECO:0007669"/>
    <property type="project" value="UniProtKB-UniRule"/>
</dbReference>
<dbReference type="GO" id="GO:0097216">
    <property type="term" value="F:guanosine tetraphosphate binding"/>
    <property type="evidence" value="ECO:0007669"/>
    <property type="project" value="UniProtKB-ARBA"/>
</dbReference>
<dbReference type="GO" id="GO:0003743">
    <property type="term" value="F:translation initiation factor activity"/>
    <property type="evidence" value="ECO:0007669"/>
    <property type="project" value="UniProtKB-UniRule"/>
</dbReference>
<dbReference type="CDD" id="cd01887">
    <property type="entry name" value="IF2_eIF5B"/>
    <property type="match status" value="1"/>
</dbReference>
<dbReference type="CDD" id="cd03702">
    <property type="entry name" value="IF2_mtIF2_II"/>
    <property type="match status" value="1"/>
</dbReference>
<dbReference type="CDD" id="cd03692">
    <property type="entry name" value="mtIF2_IVc"/>
    <property type="match status" value="1"/>
</dbReference>
<dbReference type="FunFam" id="2.40.30.10:FF:000007">
    <property type="entry name" value="Translation initiation factor IF-2"/>
    <property type="match status" value="1"/>
</dbReference>
<dbReference type="FunFam" id="2.40.30.10:FF:000008">
    <property type="entry name" value="Translation initiation factor IF-2"/>
    <property type="match status" value="1"/>
</dbReference>
<dbReference type="FunFam" id="3.30.56.50:FF:000001">
    <property type="entry name" value="Translation initiation factor IF-2"/>
    <property type="match status" value="1"/>
</dbReference>
<dbReference type="FunFam" id="3.40.50.10050:FF:000001">
    <property type="entry name" value="Translation initiation factor IF-2"/>
    <property type="match status" value="1"/>
</dbReference>
<dbReference type="FunFam" id="3.40.50.300:FF:000019">
    <property type="entry name" value="Translation initiation factor IF-2"/>
    <property type="match status" value="1"/>
</dbReference>
<dbReference type="Gene3D" id="3.40.50.300">
    <property type="entry name" value="P-loop containing nucleotide triphosphate hydrolases"/>
    <property type="match status" value="1"/>
</dbReference>
<dbReference type="Gene3D" id="3.30.56.50">
    <property type="entry name" value="Putative DNA-binding domain, N-terminal subdomain of bacterial translation initiation factor IF2"/>
    <property type="match status" value="1"/>
</dbReference>
<dbReference type="Gene3D" id="2.40.30.10">
    <property type="entry name" value="Translation factors"/>
    <property type="match status" value="2"/>
</dbReference>
<dbReference type="Gene3D" id="3.40.50.10050">
    <property type="entry name" value="Translation initiation factor IF- 2, domain 3"/>
    <property type="match status" value="1"/>
</dbReference>
<dbReference type="HAMAP" id="MF_00100_B">
    <property type="entry name" value="IF_2_B"/>
    <property type="match status" value="1"/>
</dbReference>
<dbReference type="InterPro" id="IPR009061">
    <property type="entry name" value="DNA-bd_dom_put_sf"/>
</dbReference>
<dbReference type="InterPro" id="IPR053905">
    <property type="entry name" value="EF-G-like_DII"/>
</dbReference>
<dbReference type="InterPro" id="IPR004161">
    <property type="entry name" value="EFTu-like_2"/>
</dbReference>
<dbReference type="InterPro" id="IPR013575">
    <property type="entry name" value="IF2_assoc_dom_bac"/>
</dbReference>
<dbReference type="InterPro" id="IPR044145">
    <property type="entry name" value="IF2_II"/>
</dbReference>
<dbReference type="InterPro" id="IPR006847">
    <property type="entry name" value="IF2_N"/>
</dbReference>
<dbReference type="InterPro" id="IPR027417">
    <property type="entry name" value="P-loop_NTPase"/>
</dbReference>
<dbReference type="InterPro" id="IPR005225">
    <property type="entry name" value="Small_GTP-bd"/>
</dbReference>
<dbReference type="InterPro" id="IPR000795">
    <property type="entry name" value="T_Tr_GTP-bd_dom"/>
</dbReference>
<dbReference type="InterPro" id="IPR000178">
    <property type="entry name" value="TF_IF2_bacterial-like"/>
</dbReference>
<dbReference type="InterPro" id="IPR015760">
    <property type="entry name" value="TIF_IF2"/>
</dbReference>
<dbReference type="InterPro" id="IPR023115">
    <property type="entry name" value="TIF_IF2_dom3"/>
</dbReference>
<dbReference type="InterPro" id="IPR036925">
    <property type="entry name" value="TIF_IF2_dom3_sf"/>
</dbReference>
<dbReference type="InterPro" id="IPR009000">
    <property type="entry name" value="Transl_B-barrel_sf"/>
</dbReference>
<dbReference type="NCBIfam" id="TIGR00487">
    <property type="entry name" value="IF-2"/>
    <property type="match status" value="1"/>
</dbReference>
<dbReference type="NCBIfam" id="TIGR00231">
    <property type="entry name" value="small_GTP"/>
    <property type="match status" value="1"/>
</dbReference>
<dbReference type="PANTHER" id="PTHR43381:SF5">
    <property type="entry name" value="TR-TYPE G DOMAIN-CONTAINING PROTEIN"/>
    <property type="match status" value="1"/>
</dbReference>
<dbReference type="PANTHER" id="PTHR43381">
    <property type="entry name" value="TRANSLATION INITIATION FACTOR IF-2-RELATED"/>
    <property type="match status" value="1"/>
</dbReference>
<dbReference type="Pfam" id="PF22042">
    <property type="entry name" value="EF-G_D2"/>
    <property type="match status" value="1"/>
</dbReference>
<dbReference type="Pfam" id="PF00009">
    <property type="entry name" value="GTP_EFTU"/>
    <property type="match status" value="1"/>
</dbReference>
<dbReference type="Pfam" id="PF03144">
    <property type="entry name" value="GTP_EFTU_D2"/>
    <property type="match status" value="1"/>
</dbReference>
<dbReference type="Pfam" id="PF11987">
    <property type="entry name" value="IF-2"/>
    <property type="match status" value="1"/>
</dbReference>
<dbReference type="Pfam" id="PF08364">
    <property type="entry name" value="IF2_assoc"/>
    <property type="match status" value="1"/>
</dbReference>
<dbReference type="Pfam" id="PF04760">
    <property type="entry name" value="IF2_N"/>
    <property type="match status" value="2"/>
</dbReference>
<dbReference type="SUPFAM" id="SSF52156">
    <property type="entry name" value="Initiation factor IF2/eIF5b, domain 3"/>
    <property type="match status" value="1"/>
</dbReference>
<dbReference type="SUPFAM" id="SSF52540">
    <property type="entry name" value="P-loop containing nucleoside triphosphate hydrolases"/>
    <property type="match status" value="1"/>
</dbReference>
<dbReference type="SUPFAM" id="SSF46955">
    <property type="entry name" value="Putative DNA-binding domain"/>
    <property type="match status" value="1"/>
</dbReference>
<dbReference type="SUPFAM" id="SSF50447">
    <property type="entry name" value="Translation proteins"/>
    <property type="match status" value="2"/>
</dbReference>
<dbReference type="PROSITE" id="PS51722">
    <property type="entry name" value="G_TR_2"/>
    <property type="match status" value="1"/>
</dbReference>
<dbReference type="PROSITE" id="PS01176">
    <property type="entry name" value="IF2"/>
    <property type="match status" value="1"/>
</dbReference>
<organism>
    <name type="scientific">Escherichia coli O7:K1 (strain IAI39 / ExPEC)</name>
    <dbReference type="NCBI Taxonomy" id="585057"/>
    <lineage>
        <taxon>Bacteria</taxon>
        <taxon>Pseudomonadati</taxon>
        <taxon>Pseudomonadota</taxon>
        <taxon>Gammaproteobacteria</taxon>
        <taxon>Enterobacterales</taxon>
        <taxon>Enterobacteriaceae</taxon>
        <taxon>Escherichia</taxon>
    </lineage>
</organism>
<comment type="function">
    <text evidence="2">One of the essential components for the initiation of protein synthesis. Protects formylmethionyl-tRNA from spontaneous hydrolysis and promotes its binding to the 30S ribosomal subunits. Also involved in the hydrolysis of GTP during the formation of the 70S ribosomal complex.</text>
</comment>
<comment type="subcellular location">
    <subcellularLocation>
        <location evidence="2">Cytoplasm</location>
    </subcellularLocation>
</comment>
<comment type="similarity">
    <text evidence="2">Belongs to the TRAFAC class translation factor GTPase superfamily. Classic translation factor GTPase family. IF-2 subfamily.</text>
</comment>
<sequence length="890" mass="97350">MTDVTIKTLAAERQTSVERLVQQFADAGIRKSADDSVSAQEKQTLIDHLNQKNSGPDKLTLQRKTRSTLNIPGTGGKSKSVQIEVRKKRTFVKRDPQEAERLAAEEQAQREAEEQARREAEESAKREAQQKAEREAAEQAKREAAEQAKREAAEKDKVSNQQDDMTKNAQAEKARREQEAAELKRKAEEEARRKLEEEARRVAEEARRMAEENKWTDNAEPTEDSSDYHVTTSQHARQAEDESDREVEGGRGRGRNAKAARPKKGNKHAESKADREEARAAVRGGKGGKRKGSSLQQGFQKPAQAVNRDVVIGETITVGELANKMAVKGSQVIKAMMKLGAMATINQVIDQETAQLVAEEMGHKVILRRENELEEAVMSDRDTGAAAEPRAPVVTIMGHVDHGKTSLLDYIRSTKVASGEAGGITQHIGAYHVETENGMITFLDTPGHAAFTSMRARGAQATDIVVLVVAADDGVMPQTIEAIQHAKAAQVPVVVAVNKIDKPEADPDRVKNELSQYGILPEEWGGESQFVHVSAKAGTGIDELLDAILLQAEVLELKAVRKGMASGAVIESFLDKGRGPVATVLVREGTLHKGDIVLCGFEYGRVRAMRNELGQEVLEAGPSIPVEILGLSGVPAAGDEVTVVRDEKKAREVALYRQGKFREVKLARQQKSKLENMFANMTEGEVHEVNIVLKADVQGSVEAISDSLLKLSTDEVKVKIIGSGVGGITETDATLAAASNAILVGFNVRADASARKVIEAESLDLRYYSVIYNLIDEVKAAMSGMLSPELKQQIIGLAEVRDVFKSPKFGAIAGCMVTEGVVKRHNPIRVLRDNVVIYEGELESLRRFKDDVNEVRNGMECGIGVKNYNDVRTGDVIEVFEIIEIQRTIA</sequence>
<evidence type="ECO:0000250" key="1"/>
<evidence type="ECO:0000255" key="2">
    <source>
        <dbReference type="HAMAP-Rule" id="MF_00100"/>
    </source>
</evidence>
<evidence type="ECO:0000256" key="3">
    <source>
        <dbReference type="SAM" id="MobiDB-lite"/>
    </source>
</evidence>
<name>IF2_ECO7I</name>
<protein>
    <recommendedName>
        <fullName evidence="2">Translation initiation factor IF-2</fullName>
    </recommendedName>
</protein>